<organism>
    <name type="scientific">Lactococcus lactis subsp. cremoris (strain MG1363)</name>
    <dbReference type="NCBI Taxonomy" id="416870"/>
    <lineage>
        <taxon>Bacteria</taxon>
        <taxon>Bacillati</taxon>
        <taxon>Bacillota</taxon>
        <taxon>Bacilli</taxon>
        <taxon>Lactobacillales</taxon>
        <taxon>Streptococcaceae</taxon>
        <taxon>Lactococcus</taxon>
        <taxon>Lactococcus cremoris subsp. cremoris</taxon>
    </lineage>
</organism>
<protein>
    <recommendedName>
        <fullName evidence="1">S-adenosylmethionine synthase</fullName>
        <shortName evidence="1">AdoMet synthase</shortName>
        <ecNumber evidence="1">2.5.1.6</ecNumber>
    </recommendedName>
    <alternativeName>
        <fullName evidence="1">MAT</fullName>
    </alternativeName>
    <alternativeName>
        <fullName evidence="1">Methionine adenosyltransferase</fullName>
    </alternativeName>
</protein>
<sequence length="399" mass="42973">MSEKHLFTSESVSEGHPDKVADQISDAILDAILAQDPHAHVACETVVYTGTVNVFGEISTSAYVDIAHVVRETIKKIGYTDSENGFDYKSVGVHVSLVEQSSDIAQGVNEAEEVRDKNGQLVDPLDLIGAGDQGMMFGFATNETAEYMPLAISLSHKLVKKLADLRKSGEISYLRPDAKSQVTVEYDNNGKAKRVDTVVISTQHAATATNEEIHDDVINKVIKAIIPAELLDDETKYFINPTGRFVIGGPQGDSGLTGRKIIVDTYGGYAPHGGGAFSGKDATKVDRSASYAARYVAKNIVAAGLADKAQIQLSYAIGVATPTSINVETFGTGKVSDDELLAAIRKVFDLRPAGIIQMLDLLRPIYGQTAAYGHFGRTDIELPWEQTDKVEELKAVLGK</sequence>
<reference key="1">
    <citation type="journal article" date="2007" name="J. Bacteriol.">
        <title>The complete genome sequence of the lactic acid bacterial paradigm Lactococcus lactis subsp. cremoris MG1363.</title>
        <authorList>
            <person name="Wegmann U."/>
            <person name="O'Connell-Motherway M."/>
            <person name="Zomer A."/>
            <person name="Buist G."/>
            <person name="Shearman C."/>
            <person name="Canchaya C."/>
            <person name="Ventura M."/>
            <person name="Goesmann A."/>
            <person name="Gasson M.J."/>
            <person name="Kuipers O.P."/>
            <person name="van Sinderen D."/>
            <person name="Kok J."/>
        </authorList>
    </citation>
    <scope>NUCLEOTIDE SEQUENCE [LARGE SCALE GENOMIC DNA]</scope>
    <source>
        <strain>MG1363</strain>
    </source>
</reference>
<keyword id="KW-0067">ATP-binding</keyword>
<keyword id="KW-0963">Cytoplasm</keyword>
<keyword id="KW-0460">Magnesium</keyword>
<keyword id="KW-0479">Metal-binding</keyword>
<keyword id="KW-0547">Nucleotide-binding</keyword>
<keyword id="KW-0554">One-carbon metabolism</keyword>
<keyword id="KW-0630">Potassium</keyword>
<keyword id="KW-0808">Transferase</keyword>
<comment type="function">
    <text evidence="1">Catalyzes the formation of S-adenosylmethionine (AdoMet) from methionine and ATP. The overall synthetic reaction is composed of two sequential steps, AdoMet formation and the subsequent tripolyphosphate hydrolysis which occurs prior to release of AdoMet from the enzyme.</text>
</comment>
<comment type="catalytic activity">
    <reaction evidence="1">
        <text>L-methionine + ATP + H2O = S-adenosyl-L-methionine + phosphate + diphosphate</text>
        <dbReference type="Rhea" id="RHEA:21080"/>
        <dbReference type="ChEBI" id="CHEBI:15377"/>
        <dbReference type="ChEBI" id="CHEBI:30616"/>
        <dbReference type="ChEBI" id="CHEBI:33019"/>
        <dbReference type="ChEBI" id="CHEBI:43474"/>
        <dbReference type="ChEBI" id="CHEBI:57844"/>
        <dbReference type="ChEBI" id="CHEBI:59789"/>
        <dbReference type="EC" id="2.5.1.6"/>
    </reaction>
</comment>
<comment type="cofactor">
    <cofactor evidence="1">
        <name>Mg(2+)</name>
        <dbReference type="ChEBI" id="CHEBI:18420"/>
    </cofactor>
    <text evidence="1">Binds 2 divalent ions per subunit.</text>
</comment>
<comment type="cofactor">
    <cofactor evidence="1">
        <name>K(+)</name>
        <dbReference type="ChEBI" id="CHEBI:29103"/>
    </cofactor>
    <text evidence="1">Binds 1 potassium ion per subunit.</text>
</comment>
<comment type="pathway">
    <text evidence="1">Amino-acid biosynthesis; S-adenosyl-L-methionine biosynthesis; S-adenosyl-L-methionine from L-methionine: step 1/1.</text>
</comment>
<comment type="subunit">
    <text evidence="1">Homotetramer; dimer of dimers.</text>
</comment>
<comment type="subcellular location">
    <subcellularLocation>
        <location evidence="1">Cytoplasm</location>
    </subcellularLocation>
</comment>
<comment type="similarity">
    <text evidence="1">Belongs to the AdoMet synthase family.</text>
</comment>
<proteinExistence type="inferred from homology"/>
<dbReference type="EC" id="2.5.1.6" evidence="1"/>
<dbReference type="EMBL" id="AM406671">
    <property type="protein sequence ID" value="CAL98727.1"/>
    <property type="molecule type" value="Genomic_DNA"/>
</dbReference>
<dbReference type="RefSeq" id="WP_011835864.1">
    <property type="nucleotide sequence ID" value="NC_009004.1"/>
</dbReference>
<dbReference type="SMR" id="A2RN40"/>
<dbReference type="STRING" id="416870.llmg_2160"/>
<dbReference type="KEGG" id="llm:llmg_2160"/>
<dbReference type="eggNOG" id="COG0192">
    <property type="taxonomic scope" value="Bacteria"/>
</dbReference>
<dbReference type="HOGENOM" id="CLU_041802_1_1_9"/>
<dbReference type="OrthoDB" id="9801686at2"/>
<dbReference type="PhylomeDB" id="A2RN40"/>
<dbReference type="UniPathway" id="UPA00315">
    <property type="reaction ID" value="UER00080"/>
</dbReference>
<dbReference type="Proteomes" id="UP000000364">
    <property type="component" value="Chromosome"/>
</dbReference>
<dbReference type="GO" id="GO:0005737">
    <property type="term" value="C:cytoplasm"/>
    <property type="evidence" value="ECO:0007669"/>
    <property type="project" value="UniProtKB-SubCell"/>
</dbReference>
<dbReference type="GO" id="GO:0005524">
    <property type="term" value="F:ATP binding"/>
    <property type="evidence" value="ECO:0007669"/>
    <property type="project" value="UniProtKB-UniRule"/>
</dbReference>
<dbReference type="GO" id="GO:0000287">
    <property type="term" value="F:magnesium ion binding"/>
    <property type="evidence" value="ECO:0007669"/>
    <property type="project" value="UniProtKB-UniRule"/>
</dbReference>
<dbReference type="GO" id="GO:0004478">
    <property type="term" value="F:methionine adenosyltransferase activity"/>
    <property type="evidence" value="ECO:0007669"/>
    <property type="project" value="UniProtKB-UniRule"/>
</dbReference>
<dbReference type="GO" id="GO:0006730">
    <property type="term" value="P:one-carbon metabolic process"/>
    <property type="evidence" value="ECO:0007669"/>
    <property type="project" value="UniProtKB-KW"/>
</dbReference>
<dbReference type="GO" id="GO:0006556">
    <property type="term" value="P:S-adenosylmethionine biosynthetic process"/>
    <property type="evidence" value="ECO:0007669"/>
    <property type="project" value="UniProtKB-UniRule"/>
</dbReference>
<dbReference type="CDD" id="cd18079">
    <property type="entry name" value="S-AdoMet_synt"/>
    <property type="match status" value="1"/>
</dbReference>
<dbReference type="FunFam" id="3.30.300.10:FF:000003">
    <property type="entry name" value="S-adenosylmethionine synthase"/>
    <property type="match status" value="1"/>
</dbReference>
<dbReference type="Gene3D" id="3.30.300.10">
    <property type="match status" value="3"/>
</dbReference>
<dbReference type="HAMAP" id="MF_00086">
    <property type="entry name" value="S_AdoMet_synth1"/>
    <property type="match status" value="1"/>
</dbReference>
<dbReference type="InterPro" id="IPR022631">
    <property type="entry name" value="ADOMET_SYNTHASE_CS"/>
</dbReference>
<dbReference type="InterPro" id="IPR022630">
    <property type="entry name" value="S-AdoMet_synt_C"/>
</dbReference>
<dbReference type="InterPro" id="IPR022629">
    <property type="entry name" value="S-AdoMet_synt_central"/>
</dbReference>
<dbReference type="InterPro" id="IPR022628">
    <property type="entry name" value="S-AdoMet_synt_N"/>
</dbReference>
<dbReference type="InterPro" id="IPR002133">
    <property type="entry name" value="S-AdoMet_synthetase"/>
</dbReference>
<dbReference type="InterPro" id="IPR022636">
    <property type="entry name" value="S-AdoMet_synthetase_sfam"/>
</dbReference>
<dbReference type="NCBIfam" id="TIGR01034">
    <property type="entry name" value="metK"/>
    <property type="match status" value="1"/>
</dbReference>
<dbReference type="PANTHER" id="PTHR11964">
    <property type="entry name" value="S-ADENOSYLMETHIONINE SYNTHETASE"/>
    <property type="match status" value="1"/>
</dbReference>
<dbReference type="Pfam" id="PF02773">
    <property type="entry name" value="S-AdoMet_synt_C"/>
    <property type="match status" value="1"/>
</dbReference>
<dbReference type="Pfam" id="PF02772">
    <property type="entry name" value="S-AdoMet_synt_M"/>
    <property type="match status" value="1"/>
</dbReference>
<dbReference type="Pfam" id="PF00438">
    <property type="entry name" value="S-AdoMet_synt_N"/>
    <property type="match status" value="1"/>
</dbReference>
<dbReference type="PIRSF" id="PIRSF000497">
    <property type="entry name" value="MAT"/>
    <property type="match status" value="1"/>
</dbReference>
<dbReference type="SUPFAM" id="SSF55973">
    <property type="entry name" value="S-adenosylmethionine synthetase"/>
    <property type="match status" value="3"/>
</dbReference>
<dbReference type="PROSITE" id="PS00376">
    <property type="entry name" value="ADOMET_SYNTHASE_1"/>
    <property type="match status" value="1"/>
</dbReference>
<dbReference type="PROSITE" id="PS00377">
    <property type="entry name" value="ADOMET_SYNTHASE_2"/>
    <property type="match status" value="1"/>
</dbReference>
<name>METK_LACLM</name>
<gene>
    <name evidence="1" type="primary">metK</name>
    <name type="ordered locus">llmg_2160</name>
</gene>
<accession>A2RN40</accession>
<evidence type="ECO:0000255" key="1">
    <source>
        <dbReference type="HAMAP-Rule" id="MF_00086"/>
    </source>
</evidence>
<feature type="chain" id="PRO_0000302929" description="S-adenosylmethionine synthase">
    <location>
        <begin position="1"/>
        <end position="399"/>
    </location>
</feature>
<feature type="region of interest" description="Flexible loop" evidence="1">
    <location>
        <begin position="100"/>
        <end position="110"/>
    </location>
</feature>
<feature type="binding site" description="in other chain" evidence="1">
    <location>
        <position position="16"/>
    </location>
    <ligand>
        <name>ATP</name>
        <dbReference type="ChEBI" id="CHEBI:30616"/>
        <note>ligand shared between two neighboring subunits</note>
    </ligand>
</feature>
<feature type="binding site" evidence="1">
    <location>
        <position position="18"/>
    </location>
    <ligand>
        <name>Mg(2+)</name>
        <dbReference type="ChEBI" id="CHEBI:18420"/>
    </ligand>
</feature>
<feature type="binding site" evidence="1">
    <location>
        <position position="44"/>
    </location>
    <ligand>
        <name>K(+)</name>
        <dbReference type="ChEBI" id="CHEBI:29103"/>
    </ligand>
</feature>
<feature type="binding site" description="in other chain" evidence="1">
    <location>
        <position position="57"/>
    </location>
    <ligand>
        <name>L-methionine</name>
        <dbReference type="ChEBI" id="CHEBI:57844"/>
        <note>ligand shared between two neighboring subunits</note>
    </ligand>
</feature>
<feature type="binding site" description="in other chain" evidence="1">
    <location>
        <position position="100"/>
    </location>
    <ligand>
        <name>L-methionine</name>
        <dbReference type="ChEBI" id="CHEBI:57844"/>
        <note>ligand shared between two neighboring subunits</note>
    </ligand>
</feature>
<feature type="binding site" description="in other chain" evidence="1">
    <location>
        <begin position="177"/>
        <end position="179"/>
    </location>
    <ligand>
        <name>ATP</name>
        <dbReference type="ChEBI" id="CHEBI:30616"/>
        <note>ligand shared between two neighboring subunits</note>
    </ligand>
</feature>
<feature type="binding site" description="in other chain" evidence="1">
    <location>
        <begin position="244"/>
        <end position="245"/>
    </location>
    <ligand>
        <name>ATP</name>
        <dbReference type="ChEBI" id="CHEBI:30616"/>
        <note>ligand shared between two neighboring subunits</note>
    </ligand>
</feature>
<feature type="binding site" evidence="1">
    <location>
        <position position="253"/>
    </location>
    <ligand>
        <name>ATP</name>
        <dbReference type="ChEBI" id="CHEBI:30616"/>
        <note>ligand shared between two neighboring subunits</note>
    </ligand>
</feature>
<feature type="binding site" evidence="1">
    <location>
        <position position="253"/>
    </location>
    <ligand>
        <name>L-methionine</name>
        <dbReference type="ChEBI" id="CHEBI:57844"/>
        <note>ligand shared between two neighboring subunits</note>
    </ligand>
</feature>
<feature type="binding site" description="in other chain" evidence="1">
    <location>
        <begin position="259"/>
        <end position="260"/>
    </location>
    <ligand>
        <name>ATP</name>
        <dbReference type="ChEBI" id="CHEBI:30616"/>
        <note>ligand shared between two neighboring subunits</note>
    </ligand>
</feature>
<feature type="binding site" evidence="1">
    <location>
        <position position="276"/>
    </location>
    <ligand>
        <name>ATP</name>
        <dbReference type="ChEBI" id="CHEBI:30616"/>
        <note>ligand shared between two neighboring subunits</note>
    </ligand>
</feature>
<feature type="binding site" evidence="1">
    <location>
        <position position="280"/>
    </location>
    <ligand>
        <name>ATP</name>
        <dbReference type="ChEBI" id="CHEBI:30616"/>
        <note>ligand shared between two neighboring subunits</note>
    </ligand>
</feature>
<feature type="binding site" description="in other chain" evidence="1">
    <location>
        <position position="284"/>
    </location>
    <ligand>
        <name>L-methionine</name>
        <dbReference type="ChEBI" id="CHEBI:57844"/>
        <note>ligand shared between two neighboring subunits</note>
    </ligand>
</feature>